<proteinExistence type="inferred from homology"/>
<comment type="function">
    <text evidence="1">Specifically methylates the N4 position of cytidine in position 1402 (C1402) of 16S rRNA.</text>
</comment>
<comment type="catalytic activity">
    <reaction evidence="1">
        <text>cytidine(1402) in 16S rRNA + S-adenosyl-L-methionine = N(4)-methylcytidine(1402) in 16S rRNA + S-adenosyl-L-homocysteine + H(+)</text>
        <dbReference type="Rhea" id="RHEA:42928"/>
        <dbReference type="Rhea" id="RHEA-COMP:10286"/>
        <dbReference type="Rhea" id="RHEA-COMP:10287"/>
        <dbReference type="ChEBI" id="CHEBI:15378"/>
        <dbReference type="ChEBI" id="CHEBI:57856"/>
        <dbReference type="ChEBI" id="CHEBI:59789"/>
        <dbReference type="ChEBI" id="CHEBI:74506"/>
        <dbReference type="ChEBI" id="CHEBI:82748"/>
        <dbReference type="EC" id="2.1.1.199"/>
    </reaction>
</comment>
<comment type="subcellular location">
    <subcellularLocation>
        <location evidence="1">Cytoplasm</location>
    </subcellularLocation>
</comment>
<comment type="similarity">
    <text evidence="1">Belongs to the methyltransferase superfamily. RsmH family.</text>
</comment>
<name>RSMH_ANADF</name>
<feature type="chain" id="PRO_0000386715" description="Ribosomal RNA small subunit methyltransferase H">
    <location>
        <begin position="1"/>
        <end position="310"/>
    </location>
</feature>
<feature type="binding site" evidence="1">
    <location>
        <begin position="35"/>
        <end position="37"/>
    </location>
    <ligand>
        <name>S-adenosyl-L-methionine</name>
        <dbReference type="ChEBI" id="CHEBI:59789"/>
    </ligand>
</feature>
<feature type="binding site" evidence="1">
    <location>
        <position position="52"/>
    </location>
    <ligand>
        <name>S-adenosyl-L-methionine</name>
        <dbReference type="ChEBI" id="CHEBI:59789"/>
    </ligand>
</feature>
<feature type="binding site" evidence="1">
    <location>
        <position position="79"/>
    </location>
    <ligand>
        <name>S-adenosyl-L-methionine</name>
        <dbReference type="ChEBI" id="CHEBI:59789"/>
    </ligand>
</feature>
<feature type="binding site" evidence="1">
    <location>
        <position position="100"/>
    </location>
    <ligand>
        <name>S-adenosyl-L-methionine</name>
        <dbReference type="ChEBI" id="CHEBI:59789"/>
    </ligand>
</feature>
<feature type="binding site" evidence="1">
    <location>
        <position position="107"/>
    </location>
    <ligand>
        <name>S-adenosyl-L-methionine</name>
        <dbReference type="ChEBI" id="CHEBI:59789"/>
    </ligand>
</feature>
<evidence type="ECO:0000255" key="1">
    <source>
        <dbReference type="HAMAP-Rule" id="MF_01007"/>
    </source>
</evidence>
<organism>
    <name type="scientific">Anaeromyxobacter sp. (strain Fw109-5)</name>
    <dbReference type="NCBI Taxonomy" id="404589"/>
    <lineage>
        <taxon>Bacteria</taxon>
        <taxon>Pseudomonadati</taxon>
        <taxon>Myxococcota</taxon>
        <taxon>Myxococcia</taxon>
        <taxon>Myxococcales</taxon>
        <taxon>Cystobacterineae</taxon>
        <taxon>Anaeromyxobacteraceae</taxon>
        <taxon>Anaeromyxobacter</taxon>
    </lineage>
</organism>
<protein>
    <recommendedName>
        <fullName evidence="1">Ribosomal RNA small subunit methyltransferase H</fullName>
        <ecNumber evidence="1">2.1.1.199</ecNumber>
    </recommendedName>
    <alternativeName>
        <fullName evidence="1">16S rRNA m(4)C1402 methyltransferase</fullName>
    </alternativeName>
    <alternativeName>
        <fullName evidence="1">rRNA (cytosine-N(4)-)-methyltransferase RsmH</fullName>
    </alternativeName>
</protein>
<dbReference type="EC" id="2.1.1.199" evidence="1"/>
<dbReference type="EMBL" id="CP000769">
    <property type="protein sequence ID" value="ABS28055.1"/>
    <property type="molecule type" value="Genomic_DNA"/>
</dbReference>
<dbReference type="RefSeq" id="WP_012098689.1">
    <property type="nucleotide sequence ID" value="NC_009675.1"/>
</dbReference>
<dbReference type="SMR" id="A7HH59"/>
<dbReference type="STRING" id="404589.Anae109_3876"/>
<dbReference type="KEGG" id="afw:Anae109_3876"/>
<dbReference type="eggNOG" id="COG0275">
    <property type="taxonomic scope" value="Bacteria"/>
</dbReference>
<dbReference type="HOGENOM" id="CLU_038422_3_0_7"/>
<dbReference type="OrthoDB" id="9806637at2"/>
<dbReference type="Proteomes" id="UP000006382">
    <property type="component" value="Chromosome"/>
</dbReference>
<dbReference type="GO" id="GO:0005737">
    <property type="term" value="C:cytoplasm"/>
    <property type="evidence" value="ECO:0007669"/>
    <property type="project" value="UniProtKB-SubCell"/>
</dbReference>
<dbReference type="GO" id="GO:0071424">
    <property type="term" value="F:rRNA (cytosine-N4-)-methyltransferase activity"/>
    <property type="evidence" value="ECO:0007669"/>
    <property type="project" value="UniProtKB-UniRule"/>
</dbReference>
<dbReference type="GO" id="GO:0070475">
    <property type="term" value="P:rRNA base methylation"/>
    <property type="evidence" value="ECO:0007669"/>
    <property type="project" value="UniProtKB-UniRule"/>
</dbReference>
<dbReference type="Gene3D" id="1.10.150.170">
    <property type="entry name" value="Putative methyltransferase TM0872, insert domain"/>
    <property type="match status" value="1"/>
</dbReference>
<dbReference type="Gene3D" id="3.40.50.150">
    <property type="entry name" value="Vaccinia Virus protein VP39"/>
    <property type="match status" value="1"/>
</dbReference>
<dbReference type="HAMAP" id="MF_01007">
    <property type="entry name" value="16SrRNA_methyltr_H"/>
    <property type="match status" value="1"/>
</dbReference>
<dbReference type="InterPro" id="IPR002903">
    <property type="entry name" value="RsmH"/>
</dbReference>
<dbReference type="InterPro" id="IPR023397">
    <property type="entry name" value="SAM-dep_MeTrfase_MraW_recog"/>
</dbReference>
<dbReference type="InterPro" id="IPR029063">
    <property type="entry name" value="SAM-dependent_MTases_sf"/>
</dbReference>
<dbReference type="NCBIfam" id="TIGR00006">
    <property type="entry name" value="16S rRNA (cytosine(1402)-N(4))-methyltransferase RsmH"/>
    <property type="match status" value="1"/>
</dbReference>
<dbReference type="PANTHER" id="PTHR11265:SF0">
    <property type="entry name" value="12S RRNA N4-METHYLCYTIDINE METHYLTRANSFERASE"/>
    <property type="match status" value="1"/>
</dbReference>
<dbReference type="PANTHER" id="PTHR11265">
    <property type="entry name" value="S-ADENOSYL-METHYLTRANSFERASE MRAW"/>
    <property type="match status" value="1"/>
</dbReference>
<dbReference type="Pfam" id="PF01795">
    <property type="entry name" value="Methyltransf_5"/>
    <property type="match status" value="1"/>
</dbReference>
<dbReference type="PIRSF" id="PIRSF004486">
    <property type="entry name" value="MraW"/>
    <property type="match status" value="1"/>
</dbReference>
<dbReference type="SUPFAM" id="SSF81799">
    <property type="entry name" value="Putative methyltransferase TM0872, insert domain"/>
    <property type="match status" value="1"/>
</dbReference>
<dbReference type="SUPFAM" id="SSF53335">
    <property type="entry name" value="S-adenosyl-L-methionine-dependent methyltransferases"/>
    <property type="match status" value="1"/>
</dbReference>
<accession>A7HH59</accession>
<keyword id="KW-0963">Cytoplasm</keyword>
<keyword id="KW-0489">Methyltransferase</keyword>
<keyword id="KW-1185">Reference proteome</keyword>
<keyword id="KW-0698">rRNA processing</keyword>
<keyword id="KW-0949">S-adenosyl-L-methionine</keyword>
<keyword id="KW-0808">Transferase</keyword>
<sequence>MSGEFVHASVLAREVVEVLRPAPGKLLLDGTLGGGGHSELLLERGARVIGLDKDPRALAAATARLARWGEAFRAVRADFRDAKNVLSALGLTGVDGTLVDLGVSSPQLDQADRGFSFSRPGPLDMRMGDEGERLEDLLRRIDERELARILREYGEEPFARPIARAVKRAVESDEALDTARLADIVAKAIPRKAWPRRIHPATRTFQALRIAVNDELGALAAWLDGLPATLNVGGRAAAISFHSLEDRMVKERFRALTQACTCPPDLPVCACGARASFAAITRKAVVASEAEVAENPRARSAKLRAVEKIR</sequence>
<reference key="1">
    <citation type="journal article" date="2015" name="Genome Announc.">
        <title>Complete genome sequence of Anaeromyxobacter sp. Fw109-5, an anaerobic, metal-reducing bacterium isolated from a contaminated subsurface environment.</title>
        <authorList>
            <person name="Hwang C."/>
            <person name="Copeland A."/>
            <person name="Lucas S."/>
            <person name="Lapidus A."/>
            <person name="Barry K."/>
            <person name="Glavina Del Rio T."/>
            <person name="Dalin E."/>
            <person name="Tice H."/>
            <person name="Pitluck S."/>
            <person name="Sims D."/>
            <person name="Brettin T."/>
            <person name="Bruce D.C."/>
            <person name="Detter J.C."/>
            <person name="Han C.S."/>
            <person name="Schmutz J."/>
            <person name="Larimer F.W."/>
            <person name="Land M.L."/>
            <person name="Hauser L.J."/>
            <person name="Kyrpides N."/>
            <person name="Lykidis A."/>
            <person name="Richardson P."/>
            <person name="Belieav A."/>
            <person name="Sanford R.A."/>
            <person name="Loeffler F.E."/>
            <person name="Fields M.W."/>
        </authorList>
    </citation>
    <scope>NUCLEOTIDE SEQUENCE [LARGE SCALE GENOMIC DNA]</scope>
    <source>
        <strain>Fw109-5</strain>
    </source>
</reference>
<gene>
    <name evidence="1" type="primary">rsmH</name>
    <name type="synonym">mraW</name>
    <name type="ordered locus">Anae109_3876</name>
</gene>